<proteinExistence type="predicted"/>
<name>Y5975_DICDI</name>
<keyword id="KW-0175">Coiled coil</keyword>
<keyword id="KW-1185">Reference proteome</keyword>
<organism>
    <name type="scientific">Dictyostelium discoideum</name>
    <name type="common">Social amoeba</name>
    <dbReference type="NCBI Taxonomy" id="44689"/>
    <lineage>
        <taxon>Eukaryota</taxon>
        <taxon>Amoebozoa</taxon>
        <taxon>Evosea</taxon>
        <taxon>Eumycetozoa</taxon>
        <taxon>Dictyostelia</taxon>
        <taxon>Dictyosteliales</taxon>
        <taxon>Dictyosteliaceae</taxon>
        <taxon>Dictyostelium</taxon>
    </lineage>
</organism>
<feature type="chain" id="PRO_0000389212" description="von Willebrand factor A domain-containing protein DDB_G0285975">
    <location>
        <begin position="1"/>
        <end position="917"/>
    </location>
</feature>
<feature type="domain" description="VIT" evidence="3">
    <location>
        <begin position="87"/>
        <end position="215"/>
    </location>
</feature>
<feature type="domain" description="VWFA" evidence="2">
    <location>
        <begin position="339"/>
        <end position="507"/>
    </location>
</feature>
<feature type="domain" description="t-SNARE coiled-coil homology" evidence="1">
    <location>
        <begin position="679"/>
        <end position="741"/>
    </location>
</feature>
<feature type="region of interest" description="Disordered" evidence="4">
    <location>
        <begin position="12"/>
        <end position="51"/>
    </location>
</feature>
<feature type="region of interest" description="Disordered" evidence="4">
    <location>
        <begin position="751"/>
        <end position="822"/>
    </location>
</feature>
<feature type="compositionally biased region" description="Low complexity" evidence="4">
    <location>
        <begin position="13"/>
        <end position="51"/>
    </location>
</feature>
<feature type="compositionally biased region" description="Low complexity" evidence="4">
    <location>
        <begin position="751"/>
        <end position="760"/>
    </location>
</feature>
<feature type="compositionally biased region" description="Low complexity" evidence="4">
    <location>
        <begin position="774"/>
        <end position="818"/>
    </location>
</feature>
<accession>Q54MG4</accession>
<sequence length="917" mass="103523">MLQSLKNVFFSDTTTTTTPTTPTTPTTPTTTPTTTTTPTTTPTTTTTSTTPISNLSIKRDIGNINDYKNANYFNYYRILENKYNYLRYNTGLKNISNNETFKLIDFTIDSEMNNTCITSNWNQKYSNNSSTPVEGVYKIPLAPYSVVSGFTVEYQDKVFIGKIKSKEKAQNQYSDSIASGGQAFLAEKTQDGQFSFRIGNLPPNENVTIHLTIISEVCPHLSSLQNCFHRFLFPNYSFNFQFNLNIKLTLPIKTIELLYYPNKDIKFKENSNNKEATLTFSSNNGIDDDIVCIVEPENDIERPQSIIEHSKLNNTYAVSVNFTPSFSHLTSDDVNQKSEFIFLIDCSGSMSGEPIKKAKRALEIIIRSLNENCKFNIYCFGSRFTKAFDNSKMYNDETLKEISGYVEKIDADLGGTELLPPIRDILSTESDFEYPRQLFILTDGEVSERDSLINYVATESNNTRIFTYGIGNSVDTELVIGLSKACKGYYEMIKDNSNFEEQVMKLVSIAFEPTLSNIKVDWGTELQIEQGPTKIRPLYSGETLIVYALLKDNKIPQSTVQVSLIGDGPTGSKLEFPITLDFSKTIDYENNSVHTLAAFNIIKDLEEVERKGNHSNNRDRIEELGKNYGLISKYTSYIVTAASEQVTEETMKTLNIIQIPTTTTTSHTNFETEEDSDDLFSSENRNQTLANISNDMEKIKDIFDDISRLISEQSCMLNEIGDANIEASTLGINSIPQKSNIFSKITSFFSSPSEVSTSKSNFDSDIGSEERRNNNNNNNNNNININNNNNNNNNNNNNNNNNNNNNNNNNNNNNNNNNSDNSDSLLKLIRLQKANGSWSSPFSEFKIDLSKKPSNIDNDDIWITLIVINKILNDYPTQQSQYDLVIQKASKWVKQQLTRLNIPNQYGSLLATSKLYI</sequence>
<reference key="1">
    <citation type="journal article" date="2005" name="Nature">
        <title>The genome of the social amoeba Dictyostelium discoideum.</title>
        <authorList>
            <person name="Eichinger L."/>
            <person name="Pachebat J.A."/>
            <person name="Gloeckner G."/>
            <person name="Rajandream M.A."/>
            <person name="Sucgang R."/>
            <person name="Berriman M."/>
            <person name="Song J."/>
            <person name="Olsen R."/>
            <person name="Szafranski K."/>
            <person name="Xu Q."/>
            <person name="Tunggal B."/>
            <person name="Kummerfeld S."/>
            <person name="Madera M."/>
            <person name="Konfortov B.A."/>
            <person name="Rivero F."/>
            <person name="Bankier A.T."/>
            <person name="Lehmann R."/>
            <person name="Hamlin N."/>
            <person name="Davies R."/>
            <person name="Gaudet P."/>
            <person name="Fey P."/>
            <person name="Pilcher K."/>
            <person name="Chen G."/>
            <person name="Saunders D."/>
            <person name="Sodergren E.J."/>
            <person name="Davis P."/>
            <person name="Kerhornou A."/>
            <person name="Nie X."/>
            <person name="Hall N."/>
            <person name="Anjard C."/>
            <person name="Hemphill L."/>
            <person name="Bason N."/>
            <person name="Farbrother P."/>
            <person name="Desany B."/>
            <person name="Just E."/>
            <person name="Morio T."/>
            <person name="Rost R."/>
            <person name="Churcher C.M."/>
            <person name="Cooper J."/>
            <person name="Haydock S."/>
            <person name="van Driessche N."/>
            <person name="Cronin A."/>
            <person name="Goodhead I."/>
            <person name="Muzny D.M."/>
            <person name="Mourier T."/>
            <person name="Pain A."/>
            <person name="Lu M."/>
            <person name="Harper D."/>
            <person name="Lindsay R."/>
            <person name="Hauser H."/>
            <person name="James K.D."/>
            <person name="Quiles M."/>
            <person name="Madan Babu M."/>
            <person name="Saito T."/>
            <person name="Buchrieser C."/>
            <person name="Wardroper A."/>
            <person name="Felder M."/>
            <person name="Thangavelu M."/>
            <person name="Johnson D."/>
            <person name="Knights A."/>
            <person name="Loulseged H."/>
            <person name="Mungall K.L."/>
            <person name="Oliver K."/>
            <person name="Price C."/>
            <person name="Quail M.A."/>
            <person name="Urushihara H."/>
            <person name="Hernandez J."/>
            <person name="Rabbinowitsch E."/>
            <person name="Steffen D."/>
            <person name="Sanders M."/>
            <person name="Ma J."/>
            <person name="Kohara Y."/>
            <person name="Sharp S."/>
            <person name="Simmonds M.N."/>
            <person name="Spiegler S."/>
            <person name="Tivey A."/>
            <person name="Sugano S."/>
            <person name="White B."/>
            <person name="Walker D."/>
            <person name="Woodward J.R."/>
            <person name="Winckler T."/>
            <person name="Tanaka Y."/>
            <person name="Shaulsky G."/>
            <person name="Schleicher M."/>
            <person name="Weinstock G.M."/>
            <person name="Rosenthal A."/>
            <person name="Cox E.C."/>
            <person name="Chisholm R.L."/>
            <person name="Gibbs R.A."/>
            <person name="Loomis W.F."/>
            <person name="Platzer M."/>
            <person name="Kay R.R."/>
            <person name="Williams J.G."/>
            <person name="Dear P.H."/>
            <person name="Noegel A.A."/>
            <person name="Barrell B.G."/>
            <person name="Kuspa A."/>
        </authorList>
    </citation>
    <scope>NUCLEOTIDE SEQUENCE [LARGE SCALE GENOMIC DNA]</scope>
    <source>
        <strain>AX4</strain>
    </source>
</reference>
<dbReference type="EMBL" id="AAFI02000082">
    <property type="protein sequence ID" value="EAL64446.1"/>
    <property type="molecule type" value="Genomic_DNA"/>
</dbReference>
<dbReference type="RefSeq" id="XP_637950.1">
    <property type="nucleotide sequence ID" value="XM_632858.1"/>
</dbReference>
<dbReference type="SMR" id="Q54MG4"/>
<dbReference type="FunCoup" id="Q54MG4">
    <property type="interactions" value="6"/>
</dbReference>
<dbReference type="STRING" id="44689.Q54MG4"/>
<dbReference type="GlyGen" id="Q54MG4">
    <property type="glycosylation" value="1 site"/>
</dbReference>
<dbReference type="PaxDb" id="44689-DDB0218765"/>
<dbReference type="EnsemblProtists" id="EAL64446">
    <property type="protein sequence ID" value="EAL64446"/>
    <property type="gene ID" value="DDB_G0285975"/>
</dbReference>
<dbReference type="GeneID" id="8625377"/>
<dbReference type="KEGG" id="ddi:DDB_G0285975"/>
<dbReference type="dictyBase" id="DDB_G0285975"/>
<dbReference type="VEuPathDB" id="AmoebaDB:DDB_G0285975"/>
<dbReference type="eggNOG" id="ENOG502QRPK">
    <property type="taxonomic scope" value="Eukaryota"/>
</dbReference>
<dbReference type="HOGENOM" id="CLU_327738_0_0_1"/>
<dbReference type="InParanoid" id="Q54MG4"/>
<dbReference type="OMA" id="TAGHPCQ"/>
<dbReference type="PhylomeDB" id="Q54MG4"/>
<dbReference type="PRO" id="PR:Q54MG4"/>
<dbReference type="Proteomes" id="UP000002195">
    <property type="component" value="Chromosome 4"/>
</dbReference>
<dbReference type="GO" id="GO:0016020">
    <property type="term" value="C:membrane"/>
    <property type="evidence" value="ECO:0007669"/>
    <property type="project" value="InterPro"/>
</dbReference>
<dbReference type="GO" id="GO:0016192">
    <property type="term" value="P:vesicle-mediated transport"/>
    <property type="evidence" value="ECO:0007669"/>
    <property type="project" value="InterPro"/>
</dbReference>
<dbReference type="Gene3D" id="1.20.5.110">
    <property type="match status" value="1"/>
</dbReference>
<dbReference type="Gene3D" id="3.40.50.410">
    <property type="entry name" value="von Willebrand factor, type A domain"/>
    <property type="match status" value="1"/>
</dbReference>
<dbReference type="InterPro" id="IPR010989">
    <property type="entry name" value="SNARE"/>
</dbReference>
<dbReference type="InterPro" id="IPR000727">
    <property type="entry name" value="T_SNARE_dom"/>
</dbReference>
<dbReference type="InterPro" id="IPR013694">
    <property type="entry name" value="VIT"/>
</dbReference>
<dbReference type="InterPro" id="IPR002035">
    <property type="entry name" value="VWF_A"/>
</dbReference>
<dbReference type="InterPro" id="IPR036465">
    <property type="entry name" value="vWFA_dom_sf"/>
</dbReference>
<dbReference type="PANTHER" id="PTHR45737">
    <property type="entry name" value="VON WILLEBRAND FACTOR A DOMAIN-CONTAINING PROTEIN 5A"/>
    <property type="match status" value="1"/>
</dbReference>
<dbReference type="PANTHER" id="PTHR45737:SF1">
    <property type="entry name" value="VON WILLEBRAND FACTOR A DOMAIN-CONTAINING PROTEIN DDB_G0267758-RELATED"/>
    <property type="match status" value="1"/>
</dbReference>
<dbReference type="Pfam" id="PF08487">
    <property type="entry name" value="VIT"/>
    <property type="match status" value="1"/>
</dbReference>
<dbReference type="Pfam" id="PF13768">
    <property type="entry name" value="VWA_3"/>
    <property type="match status" value="1"/>
</dbReference>
<dbReference type="SMART" id="SM00609">
    <property type="entry name" value="VIT"/>
    <property type="match status" value="1"/>
</dbReference>
<dbReference type="SMART" id="SM00327">
    <property type="entry name" value="VWA"/>
    <property type="match status" value="1"/>
</dbReference>
<dbReference type="SUPFAM" id="SSF47661">
    <property type="entry name" value="t-snare proteins"/>
    <property type="match status" value="1"/>
</dbReference>
<dbReference type="SUPFAM" id="SSF53300">
    <property type="entry name" value="vWA-like"/>
    <property type="match status" value="1"/>
</dbReference>
<dbReference type="PROSITE" id="PS50192">
    <property type="entry name" value="T_SNARE"/>
    <property type="match status" value="1"/>
</dbReference>
<dbReference type="PROSITE" id="PS51468">
    <property type="entry name" value="VIT"/>
    <property type="match status" value="1"/>
</dbReference>
<dbReference type="PROSITE" id="PS50234">
    <property type="entry name" value="VWFA"/>
    <property type="match status" value="1"/>
</dbReference>
<gene>
    <name type="ORF">DDB_G0285975</name>
</gene>
<evidence type="ECO:0000255" key="1">
    <source>
        <dbReference type="PROSITE-ProRule" id="PRU00202"/>
    </source>
</evidence>
<evidence type="ECO:0000255" key="2">
    <source>
        <dbReference type="PROSITE-ProRule" id="PRU00219"/>
    </source>
</evidence>
<evidence type="ECO:0000255" key="3">
    <source>
        <dbReference type="PROSITE-ProRule" id="PRU00801"/>
    </source>
</evidence>
<evidence type="ECO:0000256" key="4">
    <source>
        <dbReference type="SAM" id="MobiDB-lite"/>
    </source>
</evidence>
<protein>
    <recommendedName>
        <fullName>von Willebrand factor A domain-containing protein DDB_G0285975</fullName>
    </recommendedName>
</protein>